<accession>A1KFR7</accession>
<evidence type="ECO:0000250" key="1"/>
<evidence type="ECO:0000269" key="2">
    <source>
    </source>
</evidence>
<evidence type="ECO:0000305" key="3"/>
<reference key="1">
    <citation type="journal article" date="2007" name="Proc. Natl. Acad. Sci. U.S.A.">
        <title>Genome plasticity of BCG and impact on vaccine efficacy.</title>
        <authorList>
            <person name="Brosch R."/>
            <person name="Gordon S.V."/>
            <person name="Garnier T."/>
            <person name="Eiglmeier K."/>
            <person name="Frigui W."/>
            <person name="Valenti P."/>
            <person name="Dos Santos S."/>
            <person name="Duthoy S."/>
            <person name="Lacroix C."/>
            <person name="Garcia-Pelayo C."/>
            <person name="Inwald J.K."/>
            <person name="Golby P."/>
            <person name="Garcia J.N."/>
            <person name="Hewinson R.G."/>
            <person name="Behr M.A."/>
            <person name="Quail M.A."/>
            <person name="Churcher C."/>
            <person name="Barrell B.G."/>
            <person name="Parkhill J."/>
            <person name="Cole S.T."/>
        </authorList>
    </citation>
    <scope>NUCLEOTIDE SEQUENCE [LARGE SCALE GENOMIC DNA]</scope>
    <source>
        <strain>BCG / Pasteur 1173P2</strain>
    </source>
</reference>
<reference key="2">
    <citation type="journal article" date="2005" name="Mol. Microbiol.">
        <title>Reduced expression of antigenic proteins MPB70 and MPB83 in Mycobacterium bovis BCG strains due to a start codon mutation in sigK.</title>
        <authorList>
            <person name="Charlet D."/>
            <person name="Mostowy S."/>
            <person name="Alexander D."/>
            <person name="Sit L."/>
            <person name="Wiker H.G."/>
            <person name="Behr M.A."/>
        </authorList>
    </citation>
    <scope>FUNCTION AS A SIGMA-FACTOR</scope>
    <scope>INDUCTION</scope>
</reference>
<protein>
    <recommendedName>
        <fullName>ECF RNA polymerase sigma factor SigK</fullName>
        <shortName>ECF sigma factor SigK</shortName>
    </recommendedName>
    <alternativeName>
        <fullName>Alternative RNA polymerase sigma factor SigK</fullName>
    </alternativeName>
    <alternativeName>
        <fullName>RNA polymerase sigma-K factor</fullName>
        <shortName>Sigma-K factor</shortName>
    </alternativeName>
</protein>
<sequence length="187" mass="21035">MTGPPRLSSDLDALLRRVAGHDQAAFAEFYDHTKSRVYGLVMRVLRDTGYSEETTQEIYLEVWRNASEFDSAKGSALAWLLTMAHRRAVDRVRCEQAGNQREVRYGAANVDPASDVVADLAIAGDERRRVTECLKALTDTQRQCIELAYYGGLTYVEVSRRLAANLSTIKSRMRDALRSLRNCLDVS</sequence>
<keyword id="KW-0238">DNA-binding</keyword>
<keyword id="KW-0731">Sigma factor</keyword>
<keyword id="KW-0804">Transcription</keyword>
<keyword id="KW-0805">Transcription regulation</keyword>
<comment type="function">
    <text evidence="2">Sigma factors are initiation factors that promote the attachment of RNA polymerase to specific initiation sites and are then released. Extracytoplasmic function (ECF) sigma factors are held in an inactive form by an anti-sigma factor until released by regulated intramembrane proteolysis. Sigma-K controls genes such as mpb70 and mpb83. However, in strains with the start codon mutation (AUA), there is a decrease in SigK expression, thus affecting SigK-regulated genes expression as well.</text>
</comment>
<comment type="subunit">
    <text evidence="1">Interacts transiently with the RNA polymerase catalytic core formed by RpoA, RpoB, RpoC and RpoZ (2 alpha, 1 beta, 1 beta' and 1 omega subunit) to form the RNA polymerase holoenzyme that can initiate transcription. Interacts (via sigma-70 factor domain 4) with anti-sigma-K factor RskA (By similarity).</text>
</comment>
<comment type="induction">
    <text evidence="2">Autoregulated.</text>
</comment>
<comment type="domain">
    <text evidence="1">The sigma-70 factor domain-2 mediates sequence-specific interaction with the -10 element in promoter DNA, and plays an important role in melting the double-stranded DNA and the formation of the transcription bubble. The sigma-70 factor domain-2 mediates interaction with the RNA polymerase subunits RpoB and RpoC (By similarity).</text>
</comment>
<comment type="domain">
    <text evidence="1">The sigma-70 factor domain-4 contains a helix-turn-helix (H-T-H) motif that mediates interaction with the -35 element in promoter DNA. The domain also mediates interaction with the RNA polymerase subunit RpoA. Interactions between sigma-70 factor domain-4 and anti-sigma factors prevents interaction of sigma factors with the RNA polymerase catalytic core (By similarity).</text>
</comment>
<comment type="miscellaneous">
    <text evidence="1">Extracytoplasmic function (ECF) sigma factors are held in an inactive form by an anti-sigma factor until released by regulated intramembrane proteolysis (RIP). RIP occurs when an extracytoplasmic signal triggers a concerted proteolytic cascade to transmit information and elicit cellular responses. The membrane-spanning anti-sigma factor is first cut extracytoplasmically (site-1 protease, S1P), then within the membrane itself (site-2 protease, S2P, Rip1), while cytoplasmic proteases finish degrading the regulatory protein, liberating SigK (By similarity).</text>
</comment>
<comment type="similarity">
    <text evidence="3">Belongs to the sigma-70 factor family. ECF subfamily.</text>
</comment>
<proteinExistence type="evidence at protein level"/>
<dbReference type="EMBL" id="AM408590">
    <property type="protein sequence ID" value="CAL70469.1"/>
    <property type="molecule type" value="Genomic_DNA"/>
</dbReference>
<dbReference type="RefSeq" id="WP_003402246.1">
    <property type="nucleotide sequence ID" value="NC_008769.1"/>
</dbReference>
<dbReference type="SMR" id="A1KFR7"/>
<dbReference type="KEGG" id="mbb:BCG_0484c"/>
<dbReference type="HOGENOM" id="CLU_047691_9_3_11"/>
<dbReference type="Proteomes" id="UP000001472">
    <property type="component" value="Chromosome"/>
</dbReference>
<dbReference type="GO" id="GO:0003677">
    <property type="term" value="F:DNA binding"/>
    <property type="evidence" value="ECO:0007669"/>
    <property type="project" value="UniProtKB-KW"/>
</dbReference>
<dbReference type="GO" id="GO:0016987">
    <property type="term" value="F:sigma factor activity"/>
    <property type="evidence" value="ECO:0007669"/>
    <property type="project" value="UniProtKB-KW"/>
</dbReference>
<dbReference type="GO" id="GO:0006352">
    <property type="term" value="P:DNA-templated transcription initiation"/>
    <property type="evidence" value="ECO:0007669"/>
    <property type="project" value="InterPro"/>
</dbReference>
<dbReference type="CDD" id="cd06171">
    <property type="entry name" value="Sigma70_r4"/>
    <property type="match status" value="1"/>
</dbReference>
<dbReference type="FunFam" id="1.10.1740.10:FF:000021">
    <property type="entry name" value="ECF RNA polymerase sigma factor SigK"/>
    <property type="match status" value="1"/>
</dbReference>
<dbReference type="Gene3D" id="1.10.1740.10">
    <property type="match status" value="1"/>
</dbReference>
<dbReference type="Gene3D" id="1.10.10.10">
    <property type="entry name" value="Winged helix-like DNA-binding domain superfamily/Winged helix DNA-binding domain"/>
    <property type="match status" value="1"/>
</dbReference>
<dbReference type="InterPro" id="IPR039425">
    <property type="entry name" value="RNA_pol_sigma-70-like"/>
</dbReference>
<dbReference type="InterPro" id="IPR014284">
    <property type="entry name" value="RNA_pol_sigma-70_dom"/>
</dbReference>
<dbReference type="InterPro" id="IPR007627">
    <property type="entry name" value="RNA_pol_sigma70_r2"/>
</dbReference>
<dbReference type="InterPro" id="IPR007630">
    <property type="entry name" value="RNA_pol_sigma70_r4"/>
</dbReference>
<dbReference type="InterPro" id="IPR013325">
    <property type="entry name" value="RNA_pol_sigma_r2"/>
</dbReference>
<dbReference type="InterPro" id="IPR013324">
    <property type="entry name" value="RNA_pol_sigma_r3/r4-like"/>
</dbReference>
<dbReference type="InterPro" id="IPR036388">
    <property type="entry name" value="WH-like_DNA-bd_sf"/>
</dbReference>
<dbReference type="NCBIfam" id="NF007228">
    <property type="entry name" value="PRK09646.1"/>
    <property type="match status" value="1"/>
</dbReference>
<dbReference type="NCBIfam" id="TIGR02937">
    <property type="entry name" value="sigma70-ECF"/>
    <property type="match status" value="1"/>
</dbReference>
<dbReference type="PANTHER" id="PTHR43133:SF66">
    <property type="entry name" value="ECF RNA POLYMERASE SIGMA FACTOR SIGK"/>
    <property type="match status" value="1"/>
</dbReference>
<dbReference type="PANTHER" id="PTHR43133">
    <property type="entry name" value="RNA POLYMERASE ECF-TYPE SIGMA FACTO"/>
    <property type="match status" value="1"/>
</dbReference>
<dbReference type="Pfam" id="PF04542">
    <property type="entry name" value="Sigma70_r2"/>
    <property type="match status" value="1"/>
</dbReference>
<dbReference type="Pfam" id="PF04545">
    <property type="entry name" value="Sigma70_r4"/>
    <property type="match status" value="1"/>
</dbReference>
<dbReference type="SUPFAM" id="SSF88946">
    <property type="entry name" value="Sigma2 domain of RNA polymerase sigma factors"/>
    <property type="match status" value="1"/>
</dbReference>
<dbReference type="SUPFAM" id="SSF88659">
    <property type="entry name" value="Sigma3 and sigma4 domains of RNA polymerase sigma factors"/>
    <property type="match status" value="1"/>
</dbReference>
<name>SIGK_MYCBP</name>
<gene>
    <name type="primary">sigK</name>
    <name type="ordered locus">BCG_0484c</name>
</gene>
<feature type="chain" id="PRO_0000313840" description="ECF RNA polymerase sigma factor SigK">
    <location>
        <begin position="1"/>
        <end position="187"/>
    </location>
</feature>
<feature type="DNA-binding region" description="H-T-H motif" evidence="1">
    <location>
        <begin position="155"/>
        <end position="174"/>
    </location>
</feature>
<feature type="region of interest" description="Sigma-70 factor domain-2">
    <location>
        <begin position="30"/>
        <end position="96"/>
    </location>
</feature>
<feature type="region of interest" description="Sigma-70 factor domain-4">
    <location>
        <begin position="133"/>
        <end position="182"/>
    </location>
</feature>
<feature type="short sequence motif" description="Interaction with polymerase core subunit RpoC">
    <location>
        <begin position="53"/>
        <end position="56"/>
    </location>
</feature>
<organism>
    <name type="scientific">Mycobacterium bovis (strain BCG / Pasteur 1173P2)</name>
    <dbReference type="NCBI Taxonomy" id="410289"/>
    <lineage>
        <taxon>Bacteria</taxon>
        <taxon>Bacillati</taxon>
        <taxon>Actinomycetota</taxon>
        <taxon>Actinomycetes</taxon>
        <taxon>Mycobacteriales</taxon>
        <taxon>Mycobacteriaceae</taxon>
        <taxon>Mycobacterium</taxon>
        <taxon>Mycobacterium tuberculosis complex</taxon>
    </lineage>
</organism>